<proteinExistence type="evidence at protein level"/>
<dbReference type="EC" id="1.8.3.4" evidence="1"/>
<dbReference type="EMBL" id="KY242492">
    <property type="protein sequence ID" value="ATJ26742.1"/>
    <property type="molecule type" value="Genomic_DNA"/>
</dbReference>
<dbReference type="SMR" id="A0A291P0C1"/>
<dbReference type="BioCyc" id="MetaCyc:MONOMER-21332"/>
<dbReference type="SABIO-RK" id="A0A291P0C1"/>
<dbReference type="GO" id="GO:0042597">
    <property type="term" value="C:periplasmic space"/>
    <property type="evidence" value="ECO:0007669"/>
    <property type="project" value="UniProtKB-SubCell"/>
</dbReference>
<dbReference type="GO" id="GO:0018549">
    <property type="term" value="F:methanethiol oxidase activity"/>
    <property type="evidence" value="ECO:0007669"/>
    <property type="project" value="UniProtKB-EC"/>
</dbReference>
<dbReference type="GO" id="GO:0008430">
    <property type="term" value="F:selenium binding"/>
    <property type="evidence" value="ECO:0007669"/>
    <property type="project" value="InterPro"/>
</dbReference>
<dbReference type="Gene3D" id="2.130.10.10">
    <property type="entry name" value="YVTN repeat-like/Quinoprotein amine dehydrogenase"/>
    <property type="match status" value="1"/>
</dbReference>
<dbReference type="InterPro" id="IPR008826">
    <property type="entry name" value="Se-bd"/>
</dbReference>
<dbReference type="InterPro" id="IPR015943">
    <property type="entry name" value="WD40/YVTN_repeat-like_dom_sf"/>
</dbReference>
<dbReference type="PANTHER" id="PTHR23300">
    <property type="entry name" value="METHANETHIOL OXIDASE"/>
    <property type="match status" value="1"/>
</dbReference>
<dbReference type="PANTHER" id="PTHR23300:SF0">
    <property type="entry name" value="METHANETHIOL OXIDASE"/>
    <property type="match status" value="1"/>
</dbReference>
<dbReference type="Pfam" id="PF05694">
    <property type="entry name" value="SBP56"/>
    <property type="match status" value="1"/>
</dbReference>
<dbReference type="SUPFAM" id="SSF75011">
    <property type="entry name" value="3-carboxy-cis,cis-mucoante lactonizing enzyme"/>
    <property type="match status" value="1"/>
</dbReference>
<protein>
    <recommendedName>
        <fullName evidence="2">Methanethiol oxidase</fullName>
        <shortName evidence="2">MTO</shortName>
        <ecNumber evidence="1">1.8.3.4</ecNumber>
    </recommendedName>
</protein>
<keyword id="KW-0186">Copper</keyword>
<keyword id="KW-0903">Direct protein sequencing</keyword>
<keyword id="KW-0560">Oxidoreductase</keyword>
<keyword id="KW-0574">Periplasm</keyword>
<keyword id="KW-0732">Signal</keyword>
<accession>A0A291P0C1</accession>
<sequence length="435" mass="48307">MKKHLLAGACALAMGFAVIPGTFADETCNSPFTTALITGQEQYLHVWTLGMPGVGDESDKLVTISVDPKSDKYGKVINTLSVGGRGEAHHTGFTDDRRYLWAGRLDDNKIFIFDLIDPANPKLIKTITDFADRTGYVGPHTFYALPGRMLIQALSNTKTHDGQTGLAVYSNAGELVSLHPMPVTDGGDGYGYDIGINPAKNVLLTSSFTGWNNYMMDLGKMVKDPEAMKRFGNTMAIWDLKSMKAEKILNVPGAPLEIRWSLKPEHNWAYTATALTSKLWLIKQDDKGEWIAKETGTIGDPSKIPLPVDISITADAKGLWVNTFLDGTTRFYDISEPEHPKEVFSKKMGNQVNMVSQSYDGKRVYFTTSLIANWDKKGAENDQWLKAYDWDGKELVEKFTVDFNELKLGRAHHMKFSSKTNAAELGTNQSFPTRQ</sequence>
<comment type="function">
    <text evidence="1">Catalyzes the oxidation of methanethiol. Can also degrade ethanethiol, but not methanol, methylamine or dimethylsulfide.</text>
</comment>
<comment type="catalytic activity">
    <reaction evidence="1">
        <text>methanethiol + O2 + H2O = hydrogen sulfide + formaldehyde + H2O2 + H(+)</text>
        <dbReference type="Rhea" id="RHEA:11812"/>
        <dbReference type="ChEBI" id="CHEBI:15377"/>
        <dbReference type="ChEBI" id="CHEBI:15378"/>
        <dbReference type="ChEBI" id="CHEBI:15379"/>
        <dbReference type="ChEBI" id="CHEBI:16007"/>
        <dbReference type="ChEBI" id="CHEBI:16240"/>
        <dbReference type="ChEBI" id="CHEBI:16842"/>
        <dbReference type="ChEBI" id="CHEBI:29919"/>
        <dbReference type="EC" id="1.8.3.4"/>
    </reaction>
</comment>
<comment type="cofactor">
    <cofactor evidence="1">
        <name>Cu cation</name>
        <dbReference type="ChEBI" id="CHEBI:23378"/>
    </cofactor>
</comment>
<comment type="activity regulation">
    <text evidence="1">Inhibited by EDTA but not by EGTA.</text>
</comment>
<comment type="biophysicochemical properties">
    <kinetics>
        <KM evidence="1">0.2 uM for methanethiol</KM>
        <Vmax evidence="1">16.0 umol/min/mg enzyme</Vmax>
    </kinetics>
</comment>
<comment type="pathway">
    <text evidence="1">Organosulfur degradation.</text>
</comment>
<comment type="subunit">
    <text evidence="1">Homotetramer.</text>
</comment>
<comment type="subcellular location">
    <subcellularLocation>
        <location evidence="4">Periplasm</location>
    </subcellularLocation>
</comment>
<comment type="similarity">
    <text evidence="3">Belongs to the selenium-binding protein family.</text>
</comment>
<evidence type="ECO:0000269" key="1">
    <source>
    </source>
</evidence>
<evidence type="ECO:0000303" key="2">
    <source>
    </source>
</evidence>
<evidence type="ECO:0000305" key="3"/>
<evidence type="ECO:0000305" key="4">
    <source>
    </source>
</evidence>
<feature type="signal peptide" evidence="1">
    <location>
        <begin position="1"/>
        <end position="24"/>
    </location>
</feature>
<feature type="chain" id="PRO_5012855470" description="Methanethiol oxidase">
    <location>
        <begin position="25"/>
        <end position="435"/>
    </location>
</feature>
<reference key="1">
    <citation type="submission" date="2016-11" db="EMBL/GenBank/DDBJ databases">
        <authorList>
            <person name="Jaros S."/>
            <person name="Januszkiewicz K."/>
            <person name="Wedrychowicz H."/>
        </authorList>
    </citation>
    <scope>NUCLEOTIDE SEQUENCE [GENOMIC DNA]</scope>
    <source>
        <strain>VS</strain>
    </source>
</reference>
<reference key="2">
    <citation type="journal article" date="2018" name="ISME J.">
        <title>Bacterial SBP56 identified as a Cu-dependent methanethiol oxidase widely distributed in the biosphere.</title>
        <authorList>
            <person name="Eyice O."/>
            <person name="Myronova N."/>
            <person name="Pol A."/>
            <person name="Carrion O."/>
            <person name="Todd J.D."/>
            <person name="Smith T.J."/>
            <person name="Gurman S.J."/>
            <person name="Cuthbertson A."/>
            <person name="Mazard S."/>
            <person name="Mennink-Kersten M.A."/>
            <person name="Bugg T.D."/>
            <person name="Andersson K.K."/>
            <person name="Johnston A.W."/>
            <person name="Op den Camp H.J."/>
            <person name="Schaefer H."/>
        </authorList>
    </citation>
    <scope>PROTEIN SEQUENCE OF 25-39</scope>
    <scope>FUNCTION</scope>
    <scope>CATALYTIC ACTIVITY</scope>
    <scope>COFACTOR</scope>
    <scope>ACTIVITY REGULATION</scope>
    <scope>BIOPHYSICOCHEMICAL PROPERTIES</scope>
    <scope>PATHWAY</scope>
    <scope>SUBUNIT</scope>
    <scope>SUBCELLULAR LOCATION</scope>
    <source>
        <strain>VS</strain>
    </source>
</reference>
<gene>
    <name evidence="2" type="primary">mtoX</name>
</gene>
<name>MTO_HYPSQ</name>
<organism>
    <name type="scientific">Hyphomicrobium sp</name>
    <dbReference type="NCBI Taxonomy" id="82"/>
    <lineage>
        <taxon>Bacteria</taxon>
        <taxon>Pseudomonadati</taxon>
        <taxon>Pseudomonadota</taxon>
        <taxon>Alphaproteobacteria</taxon>
        <taxon>Hyphomicrobiales</taxon>
        <taxon>Hyphomicrobiaceae</taxon>
        <taxon>Hyphomicrobium</taxon>
    </lineage>
</organism>